<accession>O31570</accession>
<feature type="chain" id="PRO_0000162393" description="Uncharacterized isomerase YfhB">
    <location>
        <begin position="1"/>
        <end position="293"/>
    </location>
</feature>
<feature type="active site" evidence="1">
    <location>
        <position position="47"/>
    </location>
</feature>
<gene>
    <name type="primary">yfhB</name>
    <name type="ordered locus">BSU08470</name>
</gene>
<evidence type="ECO:0000250" key="1"/>
<evidence type="ECO:0000305" key="2"/>
<proteinExistence type="inferred from homology"/>
<comment type="similarity">
    <text evidence="2">Belongs to the PhzF family.</text>
</comment>
<reference key="1">
    <citation type="journal article" date="1996" name="DNA Res.">
        <title>Cloning and sequencing of a 27.8-kb nucleotide sequence of the 79 degrees-81 degrees region of the Bacillus subtilis genome containing the sspE locus.</title>
        <authorList>
            <person name="Yamamoto H."/>
            <person name="Uchiyama S."/>
            <person name="Sekiguchi J."/>
        </authorList>
    </citation>
    <scope>NUCLEOTIDE SEQUENCE [GENOMIC DNA]</scope>
</reference>
<reference key="2">
    <citation type="journal article" date="1997" name="Nature">
        <title>The complete genome sequence of the Gram-positive bacterium Bacillus subtilis.</title>
        <authorList>
            <person name="Kunst F."/>
            <person name="Ogasawara N."/>
            <person name="Moszer I."/>
            <person name="Albertini A.M."/>
            <person name="Alloni G."/>
            <person name="Azevedo V."/>
            <person name="Bertero M.G."/>
            <person name="Bessieres P."/>
            <person name="Bolotin A."/>
            <person name="Borchert S."/>
            <person name="Borriss R."/>
            <person name="Boursier L."/>
            <person name="Brans A."/>
            <person name="Braun M."/>
            <person name="Brignell S.C."/>
            <person name="Bron S."/>
            <person name="Brouillet S."/>
            <person name="Bruschi C.V."/>
            <person name="Caldwell B."/>
            <person name="Capuano V."/>
            <person name="Carter N.M."/>
            <person name="Choi S.-K."/>
            <person name="Codani J.-J."/>
            <person name="Connerton I.F."/>
            <person name="Cummings N.J."/>
            <person name="Daniel R.A."/>
            <person name="Denizot F."/>
            <person name="Devine K.M."/>
            <person name="Duesterhoeft A."/>
            <person name="Ehrlich S.D."/>
            <person name="Emmerson P.T."/>
            <person name="Entian K.-D."/>
            <person name="Errington J."/>
            <person name="Fabret C."/>
            <person name="Ferrari E."/>
            <person name="Foulger D."/>
            <person name="Fritz C."/>
            <person name="Fujita M."/>
            <person name="Fujita Y."/>
            <person name="Fuma S."/>
            <person name="Galizzi A."/>
            <person name="Galleron N."/>
            <person name="Ghim S.-Y."/>
            <person name="Glaser P."/>
            <person name="Goffeau A."/>
            <person name="Golightly E.J."/>
            <person name="Grandi G."/>
            <person name="Guiseppi G."/>
            <person name="Guy B.J."/>
            <person name="Haga K."/>
            <person name="Haiech J."/>
            <person name="Harwood C.R."/>
            <person name="Henaut A."/>
            <person name="Hilbert H."/>
            <person name="Holsappel S."/>
            <person name="Hosono S."/>
            <person name="Hullo M.-F."/>
            <person name="Itaya M."/>
            <person name="Jones L.-M."/>
            <person name="Joris B."/>
            <person name="Karamata D."/>
            <person name="Kasahara Y."/>
            <person name="Klaerr-Blanchard M."/>
            <person name="Klein C."/>
            <person name="Kobayashi Y."/>
            <person name="Koetter P."/>
            <person name="Koningstein G."/>
            <person name="Krogh S."/>
            <person name="Kumano M."/>
            <person name="Kurita K."/>
            <person name="Lapidus A."/>
            <person name="Lardinois S."/>
            <person name="Lauber J."/>
            <person name="Lazarevic V."/>
            <person name="Lee S.-M."/>
            <person name="Levine A."/>
            <person name="Liu H."/>
            <person name="Masuda S."/>
            <person name="Mauel C."/>
            <person name="Medigue C."/>
            <person name="Medina N."/>
            <person name="Mellado R.P."/>
            <person name="Mizuno M."/>
            <person name="Moestl D."/>
            <person name="Nakai S."/>
            <person name="Noback M."/>
            <person name="Noone D."/>
            <person name="O'Reilly M."/>
            <person name="Ogawa K."/>
            <person name="Ogiwara A."/>
            <person name="Oudega B."/>
            <person name="Park S.-H."/>
            <person name="Parro V."/>
            <person name="Pohl T.M."/>
            <person name="Portetelle D."/>
            <person name="Porwollik S."/>
            <person name="Prescott A.M."/>
            <person name="Presecan E."/>
            <person name="Pujic P."/>
            <person name="Purnelle B."/>
            <person name="Rapoport G."/>
            <person name="Rey M."/>
            <person name="Reynolds S."/>
            <person name="Rieger M."/>
            <person name="Rivolta C."/>
            <person name="Rocha E."/>
            <person name="Roche B."/>
            <person name="Rose M."/>
            <person name="Sadaie Y."/>
            <person name="Sato T."/>
            <person name="Scanlan E."/>
            <person name="Schleich S."/>
            <person name="Schroeter R."/>
            <person name="Scoffone F."/>
            <person name="Sekiguchi J."/>
            <person name="Sekowska A."/>
            <person name="Seror S.J."/>
            <person name="Serror P."/>
            <person name="Shin B.-S."/>
            <person name="Soldo B."/>
            <person name="Sorokin A."/>
            <person name="Tacconi E."/>
            <person name="Takagi T."/>
            <person name="Takahashi H."/>
            <person name="Takemaru K."/>
            <person name="Takeuchi M."/>
            <person name="Tamakoshi A."/>
            <person name="Tanaka T."/>
            <person name="Terpstra P."/>
            <person name="Tognoni A."/>
            <person name="Tosato V."/>
            <person name="Uchiyama S."/>
            <person name="Vandenbol M."/>
            <person name="Vannier F."/>
            <person name="Vassarotti A."/>
            <person name="Viari A."/>
            <person name="Wambutt R."/>
            <person name="Wedler E."/>
            <person name="Wedler H."/>
            <person name="Weitzenegger T."/>
            <person name="Winters P."/>
            <person name="Wipat A."/>
            <person name="Yamamoto H."/>
            <person name="Yamane K."/>
            <person name="Yasumoto K."/>
            <person name="Yata K."/>
            <person name="Yoshida K."/>
            <person name="Yoshikawa H.-F."/>
            <person name="Zumstein E."/>
            <person name="Yoshikawa H."/>
            <person name="Danchin A."/>
        </authorList>
    </citation>
    <scope>NUCLEOTIDE SEQUENCE [LARGE SCALE GENOMIC DNA]</scope>
    <source>
        <strain>168</strain>
    </source>
</reference>
<sequence length="293" mass="32129">MKEAEVLKYEAFTSSPGKGNPAGVVLQGDDYTEDEMQIIAERAGYSETSFIRKSESADLELRYFTPGHEMNLCGHATVASLYALCEKGMLESGKTYSIQTKAGILPVKISEKDGRIHITLEQASPQFKPFTGDRKKLADALGITDEDFHEDLPIVFGSTGIWTAIVPLKSLEASKKMVPDNKQFPEVLVDLPKASVHPFTFETVHPDSDLHGRHFSSPYSGTIEDPVTGTASGVMGAYMKHYGNAEQHKFIIEQGQEIGKDGKVEIEMNEAGGHVKVNMTGTAVYSETRILKI</sequence>
<name>YFHB_BACSU</name>
<organism>
    <name type="scientific">Bacillus subtilis (strain 168)</name>
    <dbReference type="NCBI Taxonomy" id="224308"/>
    <lineage>
        <taxon>Bacteria</taxon>
        <taxon>Bacillati</taxon>
        <taxon>Bacillota</taxon>
        <taxon>Bacilli</taxon>
        <taxon>Bacillales</taxon>
        <taxon>Bacillaceae</taxon>
        <taxon>Bacillus</taxon>
    </lineage>
</organism>
<protein>
    <recommendedName>
        <fullName>Uncharacterized isomerase YfhB</fullName>
        <ecNumber>5.1.-.-</ecNumber>
    </recommendedName>
</protein>
<keyword id="KW-0413">Isomerase</keyword>
<keyword id="KW-1185">Reference proteome</keyword>
<dbReference type="EC" id="5.1.-.-"/>
<dbReference type="EMBL" id="D85082">
    <property type="protein sequence ID" value="BAA24468.1"/>
    <property type="molecule type" value="Genomic_DNA"/>
</dbReference>
<dbReference type="EMBL" id="AL009126">
    <property type="protein sequence ID" value="CAB12676.1"/>
    <property type="molecule type" value="Genomic_DNA"/>
</dbReference>
<dbReference type="PIR" id="C69800">
    <property type="entry name" value="C69800"/>
</dbReference>
<dbReference type="RefSeq" id="NP_388728.1">
    <property type="nucleotide sequence ID" value="NC_000964.3"/>
</dbReference>
<dbReference type="RefSeq" id="WP_003242763.1">
    <property type="nucleotide sequence ID" value="NZ_OZ025638.1"/>
</dbReference>
<dbReference type="SMR" id="O31570"/>
<dbReference type="FunCoup" id="O31570">
    <property type="interactions" value="297"/>
</dbReference>
<dbReference type="IntAct" id="O31570">
    <property type="interactions" value="1"/>
</dbReference>
<dbReference type="STRING" id="224308.BSU08470"/>
<dbReference type="PaxDb" id="224308-BSU08470"/>
<dbReference type="DNASU" id="936191"/>
<dbReference type="EnsemblBacteria" id="CAB12676">
    <property type="protein sequence ID" value="CAB12676"/>
    <property type="gene ID" value="BSU_08470"/>
</dbReference>
<dbReference type="GeneID" id="936191"/>
<dbReference type="KEGG" id="bsu:BSU08470"/>
<dbReference type="PATRIC" id="fig|224308.179.peg.914"/>
<dbReference type="eggNOG" id="COG0384">
    <property type="taxonomic scope" value="Bacteria"/>
</dbReference>
<dbReference type="InParanoid" id="O31570"/>
<dbReference type="OrthoDB" id="9788221at2"/>
<dbReference type="PhylomeDB" id="O31570"/>
<dbReference type="BioCyc" id="BSUB:BSU08470-MONOMER"/>
<dbReference type="Proteomes" id="UP000001570">
    <property type="component" value="Chromosome"/>
</dbReference>
<dbReference type="GO" id="GO:0005737">
    <property type="term" value="C:cytoplasm"/>
    <property type="evidence" value="ECO:0000318"/>
    <property type="project" value="GO_Central"/>
</dbReference>
<dbReference type="GO" id="GO:0016853">
    <property type="term" value="F:isomerase activity"/>
    <property type="evidence" value="ECO:0000318"/>
    <property type="project" value="GO_Central"/>
</dbReference>
<dbReference type="GO" id="GO:0009058">
    <property type="term" value="P:biosynthetic process"/>
    <property type="evidence" value="ECO:0007669"/>
    <property type="project" value="InterPro"/>
</dbReference>
<dbReference type="Gene3D" id="3.10.310.10">
    <property type="entry name" value="Diaminopimelate Epimerase, Chain A, domain 1"/>
    <property type="match status" value="2"/>
</dbReference>
<dbReference type="InterPro" id="IPR003719">
    <property type="entry name" value="Phenazine_PhzF-like"/>
</dbReference>
<dbReference type="NCBIfam" id="TIGR00654">
    <property type="entry name" value="PhzF_family"/>
    <property type="match status" value="1"/>
</dbReference>
<dbReference type="PANTHER" id="PTHR13774">
    <property type="entry name" value="PHENAZINE BIOSYNTHESIS PROTEIN"/>
    <property type="match status" value="1"/>
</dbReference>
<dbReference type="PANTHER" id="PTHR13774:SF17">
    <property type="entry name" value="PHENAZINE BIOSYNTHESIS-LIKE DOMAIN-CONTAINING PROTEIN"/>
    <property type="match status" value="1"/>
</dbReference>
<dbReference type="Pfam" id="PF02567">
    <property type="entry name" value="PhzC-PhzF"/>
    <property type="match status" value="1"/>
</dbReference>
<dbReference type="PIRSF" id="PIRSF016184">
    <property type="entry name" value="PhzC_PhzF"/>
    <property type="match status" value="1"/>
</dbReference>
<dbReference type="SUPFAM" id="SSF54506">
    <property type="entry name" value="Diaminopimelate epimerase-like"/>
    <property type="match status" value="1"/>
</dbReference>